<feature type="chain" id="PRO_0000432441" description="NAC domain-containing protein 14">
    <location>
        <begin position="1"/>
        <end position="652"/>
    </location>
</feature>
<feature type="transmembrane region" description="Helical" evidence="3">
    <location>
        <begin position="609"/>
        <end position="629"/>
    </location>
</feature>
<feature type="domain" description="NAC" evidence="4">
    <location>
        <begin position="24"/>
        <end position="174"/>
    </location>
</feature>
<feature type="DNA-binding region" evidence="4">
    <location>
        <begin position="123"/>
        <end position="180"/>
    </location>
</feature>
<feature type="region of interest" description="Disordered" evidence="5">
    <location>
        <begin position="198"/>
        <end position="244"/>
    </location>
</feature>
<feature type="region of interest" description="Disordered" evidence="5">
    <location>
        <begin position="510"/>
        <end position="529"/>
    </location>
</feature>
<feature type="region of interest" description="Disordered" evidence="5">
    <location>
        <begin position="570"/>
        <end position="600"/>
    </location>
</feature>
<feature type="compositionally biased region" description="Polar residues" evidence="5">
    <location>
        <begin position="198"/>
        <end position="216"/>
    </location>
</feature>
<feature type="compositionally biased region" description="Basic and acidic residues" evidence="5">
    <location>
        <begin position="220"/>
        <end position="241"/>
    </location>
</feature>
<feature type="compositionally biased region" description="Basic and acidic residues" evidence="5">
    <location>
        <begin position="577"/>
        <end position="596"/>
    </location>
</feature>
<feature type="modified residue" description="Phosphothreonine" evidence="2">
    <location>
        <position position="152"/>
    </location>
</feature>
<reference key="1">
    <citation type="journal article" date="2000" name="Nature">
        <title>Sequence and analysis of chromosome 1 of the plant Arabidopsis thaliana.</title>
        <authorList>
            <person name="Theologis A."/>
            <person name="Ecker J.R."/>
            <person name="Palm C.J."/>
            <person name="Federspiel N.A."/>
            <person name="Kaul S."/>
            <person name="White O."/>
            <person name="Alonso J."/>
            <person name="Altafi H."/>
            <person name="Araujo R."/>
            <person name="Bowman C.L."/>
            <person name="Brooks S.Y."/>
            <person name="Buehler E."/>
            <person name="Chan A."/>
            <person name="Chao Q."/>
            <person name="Chen H."/>
            <person name="Cheuk R.F."/>
            <person name="Chin C.W."/>
            <person name="Chung M.K."/>
            <person name="Conn L."/>
            <person name="Conway A.B."/>
            <person name="Conway A.R."/>
            <person name="Creasy T.H."/>
            <person name="Dewar K."/>
            <person name="Dunn P."/>
            <person name="Etgu P."/>
            <person name="Feldblyum T.V."/>
            <person name="Feng J.-D."/>
            <person name="Fong B."/>
            <person name="Fujii C.Y."/>
            <person name="Gill J.E."/>
            <person name="Goldsmith A.D."/>
            <person name="Haas B."/>
            <person name="Hansen N.F."/>
            <person name="Hughes B."/>
            <person name="Huizar L."/>
            <person name="Hunter J.L."/>
            <person name="Jenkins J."/>
            <person name="Johnson-Hopson C."/>
            <person name="Khan S."/>
            <person name="Khaykin E."/>
            <person name="Kim C.J."/>
            <person name="Koo H.L."/>
            <person name="Kremenetskaia I."/>
            <person name="Kurtz D.B."/>
            <person name="Kwan A."/>
            <person name="Lam B."/>
            <person name="Langin-Hooper S."/>
            <person name="Lee A."/>
            <person name="Lee J.M."/>
            <person name="Lenz C.A."/>
            <person name="Li J.H."/>
            <person name="Li Y.-P."/>
            <person name="Lin X."/>
            <person name="Liu S.X."/>
            <person name="Liu Z.A."/>
            <person name="Luros J.S."/>
            <person name="Maiti R."/>
            <person name="Marziali A."/>
            <person name="Militscher J."/>
            <person name="Miranda M."/>
            <person name="Nguyen M."/>
            <person name="Nierman W.C."/>
            <person name="Osborne B.I."/>
            <person name="Pai G."/>
            <person name="Peterson J."/>
            <person name="Pham P.K."/>
            <person name="Rizzo M."/>
            <person name="Rooney T."/>
            <person name="Rowley D."/>
            <person name="Sakano H."/>
            <person name="Salzberg S.L."/>
            <person name="Schwartz J.R."/>
            <person name="Shinn P."/>
            <person name="Southwick A.M."/>
            <person name="Sun H."/>
            <person name="Tallon L.J."/>
            <person name="Tambunga G."/>
            <person name="Toriumi M.J."/>
            <person name="Town C.D."/>
            <person name="Utterback T."/>
            <person name="Van Aken S."/>
            <person name="Vaysberg M."/>
            <person name="Vysotskaia V.S."/>
            <person name="Walker M."/>
            <person name="Wu D."/>
            <person name="Yu G."/>
            <person name="Fraser C.M."/>
            <person name="Venter J.C."/>
            <person name="Davis R.W."/>
        </authorList>
    </citation>
    <scope>NUCLEOTIDE SEQUENCE [LARGE SCALE GENOMIC DNA]</scope>
    <source>
        <strain>cv. Columbia</strain>
    </source>
</reference>
<reference key="2">
    <citation type="journal article" date="2017" name="Plant J.">
        <title>Araport11: a complete reannotation of the Arabidopsis thaliana reference genome.</title>
        <authorList>
            <person name="Cheng C.Y."/>
            <person name="Krishnakumar V."/>
            <person name="Chan A.P."/>
            <person name="Thibaud-Nissen F."/>
            <person name="Schobel S."/>
            <person name="Town C.D."/>
        </authorList>
    </citation>
    <scope>GENOME REANNOTATION</scope>
    <source>
        <strain>cv. Columbia</strain>
    </source>
</reference>
<reference key="3">
    <citation type="submission" date="2008-10" db="EMBL/GenBank/DDBJ databases">
        <title>Arabidopsis ORF clones.</title>
        <authorList>
            <person name="De Los Reyes C."/>
            <person name="Quan R."/>
            <person name="Chen H."/>
            <person name="Bautista V."/>
            <person name="Kim C.J."/>
            <person name="Ecker J.R."/>
        </authorList>
    </citation>
    <scope>NUCLEOTIDE SEQUENCE [LARGE SCALE MRNA]</scope>
    <source>
        <strain>cv. Columbia</strain>
    </source>
</reference>
<reference key="4">
    <citation type="journal article" date="2003" name="DNA Res.">
        <title>Comprehensive analysis of NAC family genes in Oryza sativa and Arabidopsis thaliana.</title>
        <authorList>
            <person name="Ooka H."/>
            <person name="Satoh K."/>
            <person name="Doi K."/>
            <person name="Nagata T."/>
            <person name="Otomo Y."/>
            <person name="Murakami K."/>
            <person name="Matsubara K."/>
            <person name="Osato N."/>
            <person name="Kawai J."/>
            <person name="Carninci P."/>
            <person name="Hayashizaki Y."/>
            <person name="Suzuki K."/>
            <person name="Kojima K."/>
            <person name="Takahara Y."/>
            <person name="Yamamoto K."/>
            <person name="Kikuchi S."/>
        </authorList>
    </citation>
    <scope>GENE FAMILY</scope>
    <scope>NOMENCLATURE</scope>
</reference>
<reference key="5">
    <citation type="journal article" date="2007" name="Nucleic Acids Res.">
        <title>Exploring membrane-associated NAC transcription factors in Arabidopsis: implications for membrane biology in genome regulation.</title>
        <authorList>
            <person name="Kim S.Y."/>
            <person name="Kim S.G."/>
            <person name="Kim Y.S."/>
            <person name="Seo P.J."/>
            <person name="Bae M."/>
            <person name="Yoon H.K."/>
            <person name="Park C.M."/>
        </authorList>
    </citation>
    <scope>GENE FAMILY</scope>
    <scope>NOMENCLATURE</scope>
    <scope>TISSUE SPECIFICITY</scope>
    <scope>INDUCTION</scope>
</reference>
<protein>
    <recommendedName>
        <fullName evidence="7">NAC domain-containing protein 14</fullName>
        <shortName evidence="7">ANAC014</shortName>
    </recommendedName>
    <alternativeName>
        <fullName evidence="8">Protein NTM1-like 2</fullName>
    </alternativeName>
</protein>
<gene>
    <name evidence="11" type="primary">NAC014</name>
    <name evidence="8" type="synonym">NTL2</name>
    <name evidence="10" type="ordered locus">At1g33060</name>
</gene>
<comment type="function">
    <text evidence="1">Transcriptional activator activated by proteolytic cleavage through regulated intramembrane proteolysis (RIP).</text>
</comment>
<comment type="subcellular location">
    <subcellularLocation>
        <location evidence="1">Membrane</location>
        <topology evidence="3">Single-pass membrane protein</topology>
    </subcellularLocation>
    <subcellularLocation>
        <location evidence="1 4">Nucleus</location>
    </subcellularLocation>
    <text evidence="1">Localized primarily in plasma membrane or endoplasmic reticulum membrane as dormant form and, upon specific stress or signal, is processed into a transcriptionally active and nuclear form after a proteolytic cleavage through regulated intramembrane proteolysis (RIP).</text>
</comment>
<comment type="alternative products">
    <event type="alternative splicing"/>
    <isoform>
        <id>B5X570-1</id>
        <name>1</name>
        <sequence type="displayed"/>
    </isoform>
    <text evidence="9">A number of isoforms are produced. According to EST sequences.</text>
</comment>
<comment type="tissue specificity">
    <text evidence="6">Expressed in roots, rosette leaves, cauline leaves, shoot apex, stems and flowers.</text>
</comment>
<comment type="induction">
    <text evidence="6">By cold, heat and drought stresses.</text>
</comment>
<comment type="domain">
    <text evidence="4">The NAC domain includes a DNA binding domain and a dimerization domain.</text>
</comment>
<comment type="sequence caution" evidence="9">
    <conflict type="erroneous gene model prediction">
        <sequence resource="EMBL-CDS" id="AAF31292"/>
    </conflict>
</comment>
<sequence length="652" mass="74048">MNQIKNKTLPEMTTEQALLSMEALPLGFRFRPTDEELINHYLRLKINGRDLEVRVIPEIDVCKWEPWDLPGLSVIKTDDQEWFFFCPRDRKYPSGHRSNRATDIGYWKATGKDRTIKSKKMIIGMKKTLVFYRGRAPRGERTNWIMHEYRATDKELDGTGPGQNPYVLCRLFHKPSDSCDPAHCEEIEKVNFTPTTTTRCSPDDTSSEMVQETATSGVHALDRSDDTERCLSDKGNNDVKPDVSVINNTSVNHAETSRAKDRNLGKTLVEENPLLRDVPTLHGPILSEKSYYPGQSSIGFATSHMDSMYSSDFGNCDYGLHFQDGASEQDASLTDVLDEVFHNHNESSNDRKDFVLPNMMHWPGNTRLLSTEYPFLKDSVAFVDGSAEVSGSQQFVPDILASRWVSEQNVDSKEAVEILSSTGSSRTLTPLHNNVFGQYASSSYAAIDPFNYNVNQPEQSSFEQSHVDRNISPSNIFEFKARSRENQRDLDSVVDQGTAPRRIRLQIEQPLTPVTNKKERDADNYEEEDEVQSAMSKVVEEEPANLSAQGTAQRRIRLQTRLRKPLITLNNTKRNSNGREGEASHRKCEMQEKEDISSSSSWQKQKKSLVQFSSVVIIVAVIVVLVEIWKESRDAKCSFLFHQLDSFKGMFT</sequence>
<organism>
    <name type="scientific">Arabidopsis thaliana</name>
    <name type="common">Mouse-ear cress</name>
    <dbReference type="NCBI Taxonomy" id="3702"/>
    <lineage>
        <taxon>Eukaryota</taxon>
        <taxon>Viridiplantae</taxon>
        <taxon>Streptophyta</taxon>
        <taxon>Embryophyta</taxon>
        <taxon>Tracheophyta</taxon>
        <taxon>Spermatophyta</taxon>
        <taxon>Magnoliopsida</taxon>
        <taxon>eudicotyledons</taxon>
        <taxon>Gunneridae</taxon>
        <taxon>Pentapetalae</taxon>
        <taxon>rosids</taxon>
        <taxon>malvids</taxon>
        <taxon>Brassicales</taxon>
        <taxon>Brassicaceae</taxon>
        <taxon>Camelineae</taxon>
        <taxon>Arabidopsis</taxon>
    </lineage>
</organism>
<accession>B5X570</accession>
<accession>Q9MAN7</accession>
<dbReference type="EMBL" id="AC006424">
    <property type="protein sequence ID" value="AAF31292.1"/>
    <property type="status" value="ALT_SEQ"/>
    <property type="molecule type" value="Genomic_DNA"/>
</dbReference>
<dbReference type="EMBL" id="CP002684">
    <property type="protein sequence ID" value="AEE31559.1"/>
    <property type="molecule type" value="Genomic_DNA"/>
</dbReference>
<dbReference type="EMBL" id="BT046189">
    <property type="protein sequence ID" value="ACI49788.1"/>
    <property type="molecule type" value="mRNA"/>
</dbReference>
<dbReference type="RefSeq" id="NP_973954.1">
    <molecule id="B5X570-1"/>
    <property type="nucleotide sequence ID" value="NM_202225.2"/>
</dbReference>
<dbReference type="SMR" id="B5X570"/>
<dbReference type="FunCoup" id="B5X570">
    <property type="interactions" value="616"/>
</dbReference>
<dbReference type="STRING" id="3702.B5X570"/>
<dbReference type="iPTMnet" id="B5X570"/>
<dbReference type="PaxDb" id="3702-AT1G33060.2"/>
<dbReference type="ProteomicsDB" id="251281">
    <molecule id="B5X570-1"/>
</dbReference>
<dbReference type="EnsemblPlants" id="AT1G33060.2">
    <molecule id="B5X570-1"/>
    <property type="protein sequence ID" value="AT1G33060.2"/>
    <property type="gene ID" value="AT1G33060"/>
</dbReference>
<dbReference type="GeneID" id="840202"/>
<dbReference type="Gramene" id="AT1G33060.2">
    <molecule id="B5X570-1"/>
    <property type="protein sequence ID" value="AT1G33060.2"/>
    <property type="gene ID" value="AT1G33060"/>
</dbReference>
<dbReference type="KEGG" id="ath:AT1G33060"/>
<dbReference type="Araport" id="AT1G33060"/>
<dbReference type="TAIR" id="AT1G33060">
    <property type="gene designation" value="NAC014"/>
</dbReference>
<dbReference type="eggNOG" id="ENOG502QQI4">
    <property type="taxonomic scope" value="Eukaryota"/>
</dbReference>
<dbReference type="InParanoid" id="B5X570"/>
<dbReference type="PhylomeDB" id="B5X570"/>
<dbReference type="PRO" id="PR:B5X570"/>
<dbReference type="Proteomes" id="UP000006548">
    <property type="component" value="Chromosome 1"/>
</dbReference>
<dbReference type="ExpressionAtlas" id="B5X570">
    <property type="expression patterns" value="baseline and differential"/>
</dbReference>
<dbReference type="GO" id="GO:0016020">
    <property type="term" value="C:membrane"/>
    <property type="evidence" value="ECO:0007669"/>
    <property type="project" value="UniProtKB-SubCell"/>
</dbReference>
<dbReference type="GO" id="GO:0005634">
    <property type="term" value="C:nucleus"/>
    <property type="evidence" value="ECO:0007669"/>
    <property type="project" value="UniProtKB-SubCell"/>
</dbReference>
<dbReference type="GO" id="GO:0003700">
    <property type="term" value="F:DNA-binding transcription factor activity"/>
    <property type="evidence" value="ECO:0000250"/>
    <property type="project" value="TAIR"/>
</dbReference>
<dbReference type="GO" id="GO:0000976">
    <property type="term" value="F:transcription cis-regulatory region binding"/>
    <property type="evidence" value="ECO:0007669"/>
    <property type="project" value="UniProtKB-ARBA"/>
</dbReference>
<dbReference type="FunFam" id="2.170.150.80:FF:000002">
    <property type="entry name" value="Nac domain-containing protein 86"/>
    <property type="match status" value="1"/>
</dbReference>
<dbReference type="Gene3D" id="2.170.150.80">
    <property type="entry name" value="NAC domain"/>
    <property type="match status" value="1"/>
</dbReference>
<dbReference type="InterPro" id="IPR003441">
    <property type="entry name" value="NAC-dom"/>
</dbReference>
<dbReference type="InterPro" id="IPR036093">
    <property type="entry name" value="NAC_dom_sf"/>
</dbReference>
<dbReference type="PANTHER" id="PTHR31744:SF216">
    <property type="entry name" value="NAC TRANSCRIPTION FACTOR"/>
    <property type="match status" value="1"/>
</dbReference>
<dbReference type="PANTHER" id="PTHR31744">
    <property type="entry name" value="PROTEIN CUP-SHAPED COTYLEDON 2-RELATED"/>
    <property type="match status" value="1"/>
</dbReference>
<dbReference type="Pfam" id="PF02365">
    <property type="entry name" value="NAM"/>
    <property type="match status" value="1"/>
</dbReference>
<dbReference type="SUPFAM" id="SSF101941">
    <property type="entry name" value="NAC domain"/>
    <property type="match status" value="1"/>
</dbReference>
<dbReference type="PROSITE" id="PS51005">
    <property type="entry name" value="NAC"/>
    <property type="match status" value="1"/>
</dbReference>
<keyword id="KW-0010">Activator</keyword>
<keyword id="KW-0025">Alternative splicing</keyword>
<keyword id="KW-0238">DNA-binding</keyword>
<keyword id="KW-0472">Membrane</keyword>
<keyword id="KW-0539">Nucleus</keyword>
<keyword id="KW-0597">Phosphoprotein</keyword>
<keyword id="KW-1185">Reference proteome</keyword>
<keyword id="KW-0346">Stress response</keyword>
<keyword id="KW-0804">Transcription</keyword>
<keyword id="KW-0805">Transcription regulation</keyword>
<keyword id="KW-0812">Transmembrane</keyword>
<keyword id="KW-1133">Transmembrane helix</keyword>
<name>NAC14_ARATH</name>
<evidence type="ECO:0000250" key="1">
    <source>
        <dbReference type="UniProtKB" id="Q949N0"/>
    </source>
</evidence>
<evidence type="ECO:0000250" key="2">
    <source>
        <dbReference type="UniProtKB" id="Q9SCK6"/>
    </source>
</evidence>
<evidence type="ECO:0000255" key="3"/>
<evidence type="ECO:0000255" key="4">
    <source>
        <dbReference type="PROSITE-ProRule" id="PRU00353"/>
    </source>
</evidence>
<evidence type="ECO:0000256" key="5">
    <source>
        <dbReference type="SAM" id="MobiDB-lite"/>
    </source>
</evidence>
<evidence type="ECO:0000269" key="6">
    <source>
    </source>
</evidence>
<evidence type="ECO:0000303" key="7">
    <source>
    </source>
</evidence>
<evidence type="ECO:0000303" key="8">
    <source>
    </source>
</evidence>
<evidence type="ECO:0000305" key="9"/>
<evidence type="ECO:0000312" key="10">
    <source>
        <dbReference type="Araport" id="AT1G33060"/>
    </source>
</evidence>
<evidence type="ECO:0000312" key="11">
    <source>
        <dbReference type="EMBL" id="AEE31559.1"/>
    </source>
</evidence>
<proteinExistence type="evidence at transcript level"/>